<feature type="chain" id="PRO_0000175168" description="Coproporphyrin III ferrochelatase">
    <location>
        <begin position="1"/>
        <end position="344"/>
    </location>
</feature>
<feature type="binding site" evidence="2">
    <location>
        <position position="52"/>
    </location>
    <ligand>
        <name>Fe-coproporphyrin III</name>
        <dbReference type="ChEBI" id="CHEBI:68438"/>
    </ligand>
</feature>
<feature type="binding site" evidence="1">
    <location>
        <position position="113"/>
    </location>
    <ligand>
        <name>[2Fe-2S] cluster</name>
        <dbReference type="ChEBI" id="CHEBI:190135"/>
    </ligand>
</feature>
<feature type="binding site" evidence="2">
    <location>
        <position position="116"/>
    </location>
    <ligand>
        <name>Fe-coproporphyrin III</name>
        <dbReference type="ChEBI" id="CHEBI:68438"/>
    </ligand>
</feature>
<feature type="binding site" evidence="2">
    <location>
        <position position="172"/>
    </location>
    <ligand>
        <name>Fe(2+)</name>
        <dbReference type="ChEBI" id="CHEBI:29033"/>
    </ligand>
</feature>
<feature type="binding site" evidence="2">
    <location>
        <position position="255"/>
    </location>
    <ligand>
        <name>Fe(2+)</name>
        <dbReference type="ChEBI" id="CHEBI:29033"/>
    </ligand>
</feature>
<feature type="binding site" evidence="1">
    <location>
        <position position="316"/>
    </location>
    <ligand>
        <name>[2Fe-2S] cluster</name>
        <dbReference type="ChEBI" id="CHEBI:190135"/>
    </ligand>
</feature>
<feature type="binding site" evidence="1">
    <location>
        <position position="325"/>
    </location>
    <ligand>
        <name>[2Fe-2S] cluster</name>
        <dbReference type="ChEBI" id="CHEBI:190135"/>
    </ligand>
</feature>
<feature type="binding site" evidence="1">
    <location>
        <position position="330"/>
    </location>
    <ligand>
        <name>[2Fe-2S] cluster</name>
        <dbReference type="ChEBI" id="CHEBI:190135"/>
    </ligand>
</feature>
<comment type="function">
    <text evidence="2">Involved in coproporphyrin-dependent heme b biosynthesis. Catalyzes the insertion of ferrous iron into coproporphyrin III to form Fe-coproporphyrin III.</text>
</comment>
<comment type="catalytic activity">
    <reaction evidence="2">
        <text>Fe-coproporphyrin III + 2 H(+) = coproporphyrin III + Fe(2+)</text>
        <dbReference type="Rhea" id="RHEA:49572"/>
        <dbReference type="ChEBI" id="CHEBI:15378"/>
        <dbReference type="ChEBI" id="CHEBI:29033"/>
        <dbReference type="ChEBI" id="CHEBI:68438"/>
        <dbReference type="ChEBI" id="CHEBI:131725"/>
        <dbReference type="EC" id="4.99.1.9"/>
    </reaction>
    <physiologicalReaction direction="right-to-left" evidence="2">
        <dbReference type="Rhea" id="RHEA:49574"/>
    </physiologicalReaction>
</comment>
<comment type="cofactor">
    <cofactor evidence="1">
        <name>[2Fe-2S] cluster</name>
        <dbReference type="ChEBI" id="CHEBI:190135"/>
    </cofactor>
    <text evidence="1">Binds 1 [2Fe-2S] cluster.</text>
</comment>
<comment type="pathway">
    <text evidence="2">Porphyrin-containing compound metabolism; protoheme biosynthesis.</text>
</comment>
<comment type="subcellular location">
    <subcellularLocation>
        <location evidence="2">Cytoplasm</location>
    </subcellularLocation>
</comment>
<comment type="similarity">
    <text evidence="2 3">Belongs to the ferrochelatase family.</text>
</comment>
<reference key="1">
    <citation type="journal article" date="2003" name="Proc. Natl. Acad. Sci. U.S.A.">
        <title>The complete genome sequence of Mycobacterium bovis.</title>
        <authorList>
            <person name="Garnier T."/>
            <person name="Eiglmeier K."/>
            <person name="Camus J.-C."/>
            <person name="Medina N."/>
            <person name="Mansoor H."/>
            <person name="Pryor M."/>
            <person name="Duthoy S."/>
            <person name="Grondin S."/>
            <person name="Lacroix C."/>
            <person name="Monsempe C."/>
            <person name="Simon S."/>
            <person name="Harris B."/>
            <person name="Atkin R."/>
            <person name="Doggett J."/>
            <person name="Mayes R."/>
            <person name="Keating L."/>
            <person name="Wheeler P.R."/>
            <person name="Parkhill J."/>
            <person name="Barrell B.G."/>
            <person name="Cole S.T."/>
            <person name="Gordon S.V."/>
            <person name="Hewinson R.G."/>
        </authorList>
    </citation>
    <scope>NUCLEOTIDE SEQUENCE [LARGE SCALE GENOMIC DNA]</scope>
    <source>
        <strain>ATCC BAA-935 / AF2122/97</strain>
    </source>
</reference>
<reference key="2">
    <citation type="journal article" date="2017" name="Genome Announc.">
        <title>Updated reference genome sequence and annotation of Mycobacterium bovis AF2122/97.</title>
        <authorList>
            <person name="Malone K.M."/>
            <person name="Farrell D."/>
            <person name="Stuber T.P."/>
            <person name="Schubert O.T."/>
            <person name="Aebersold R."/>
            <person name="Robbe-Austerman S."/>
            <person name="Gordon S.V."/>
        </authorList>
    </citation>
    <scope>NUCLEOTIDE SEQUENCE [LARGE SCALE GENOMIC DNA]</scope>
    <scope>GENOME REANNOTATION</scope>
    <source>
        <strain>ATCC BAA-935 / AF2122/97</strain>
    </source>
</reference>
<proteinExistence type="inferred from homology"/>
<protein>
    <recommendedName>
        <fullName evidence="2">Coproporphyrin III ferrochelatase</fullName>
        <ecNumber evidence="2">4.99.1.9</ecNumber>
    </recommendedName>
</protein>
<dbReference type="EC" id="4.99.1.9" evidence="2"/>
<dbReference type="EMBL" id="LT708304">
    <property type="protein sequence ID" value="SIU00124.1"/>
    <property type="molecule type" value="Genomic_DNA"/>
</dbReference>
<dbReference type="RefSeq" id="NP_855173.1">
    <property type="nucleotide sequence ID" value="NC_002945.3"/>
</dbReference>
<dbReference type="RefSeq" id="WP_003407559.1">
    <property type="nucleotide sequence ID" value="NC_002945.4"/>
</dbReference>
<dbReference type="SMR" id="P0A577"/>
<dbReference type="KEGG" id="mbo:BQ2027_MB1521"/>
<dbReference type="PATRIC" id="fig|233413.5.peg.1662"/>
<dbReference type="UniPathway" id="UPA00252"/>
<dbReference type="Proteomes" id="UP000001419">
    <property type="component" value="Chromosome"/>
</dbReference>
<dbReference type="GO" id="GO:0005737">
    <property type="term" value="C:cytoplasm"/>
    <property type="evidence" value="ECO:0007669"/>
    <property type="project" value="UniProtKB-SubCell"/>
</dbReference>
<dbReference type="GO" id="GO:0051537">
    <property type="term" value="F:2 iron, 2 sulfur cluster binding"/>
    <property type="evidence" value="ECO:0007669"/>
    <property type="project" value="UniProtKB-KW"/>
</dbReference>
<dbReference type="GO" id="GO:0004325">
    <property type="term" value="F:ferrochelatase activity"/>
    <property type="evidence" value="ECO:0007669"/>
    <property type="project" value="UniProtKB-UniRule"/>
</dbReference>
<dbReference type="GO" id="GO:0046872">
    <property type="term" value="F:metal ion binding"/>
    <property type="evidence" value="ECO:0007669"/>
    <property type="project" value="UniProtKB-KW"/>
</dbReference>
<dbReference type="GO" id="GO:0006783">
    <property type="term" value="P:heme biosynthetic process"/>
    <property type="evidence" value="ECO:0007669"/>
    <property type="project" value="UniProtKB-UniRule"/>
</dbReference>
<dbReference type="CDD" id="cd00419">
    <property type="entry name" value="Ferrochelatase_C"/>
    <property type="match status" value="1"/>
</dbReference>
<dbReference type="CDD" id="cd03411">
    <property type="entry name" value="Ferrochelatase_N"/>
    <property type="match status" value="1"/>
</dbReference>
<dbReference type="FunFam" id="3.40.50.1400:FF:000007">
    <property type="entry name" value="Ferrochelatase"/>
    <property type="match status" value="1"/>
</dbReference>
<dbReference type="Gene3D" id="3.40.50.1400">
    <property type="match status" value="2"/>
</dbReference>
<dbReference type="HAMAP" id="MF_00323">
    <property type="entry name" value="Ferrochelatase"/>
    <property type="match status" value="1"/>
</dbReference>
<dbReference type="InterPro" id="IPR001015">
    <property type="entry name" value="Ferrochelatase"/>
</dbReference>
<dbReference type="InterPro" id="IPR019772">
    <property type="entry name" value="Ferrochelatase_AS"/>
</dbReference>
<dbReference type="InterPro" id="IPR033644">
    <property type="entry name" value="Ferrochelatase_C"/>
</dbReference>
<dbReference type="InterPro" id="IPR033659">
    <property type="entry name" value="Ferrochelatase_N"/>
</dbReference>
<dbReference type="NCBIfam" id="TIGR00109">
    <property type="entry name" value="hemH"/>
    <property type="match status" value="1"/>
</dbReference>
<dbReference type="NCBIfam" id="NF000689">
    <property type="entry name" value="PRK00035.2-1"/>
    <property type="match status" value="1"/>
</dbReference>
<dbReference type="PANTHER" id="PTHR11108">
    <property type="entry name" value="FERROCHELATASE"/>
    <property type="match status" value="1"/>
</dbReference>
<dbReference type="PANTHER" id="PTHR11108:SF1">
    <property type="entry name" value="FERROCHELATASE, MITOCHONDRIAL"/>
    <property type="match status" value="1"/>
</dbReference>
<dbReference type="Pfam" id="PF00762">
    <property type="entry name" value="Ferrochelatase"/>
    <property type="match status" value="1"/>
</dbReference>
<dbReference type="SUPFAM" id="SSF53800">
    <property type="entry name" value="Chelatase"/>
    <property type="match status" value="1"/>
</dbReference>
<dbReference type="PROSITE" id="PS00534">
    <property type="entry name" value="FERROCHELATASE"/>
    <property type="match status" value="1"/>
</dbReference>
<name>CPFC_MYCBO</name>
<evidence type="ECO:0000250" key="1"/>
<evidence type="ECO:0000255" key="2">
    <source>
        <dbReference type="HAMAP-Rule" id="MF_00323"/>
    </source>
</evidence>
<evidence type="ECO:0000305" key="3"/>
<gene>
    <name evidence="2" type="primary">cpfC</name>
    <name type="synonym">hemH</name>
    <name type="synonym">hemZ</name>
    <name type="ordered locus">BQ2027_MB1521</name>
</gene>
<accession>P0A577</accession>
<accession>A0A1R3XZG9</accession>
<accession>P71765</accession>
<accession>X2BI24</accession>
<organism>
    <name type="scientific">Mycobacterium bovis (strain ATCC BAA-935 / AF2122/97)</name>
    <dbReference type="NCBI Taxonomy" id="233413"/>
    <lineage>
        <taxon>Bacteria</taxon>
        <taxon>Bacillati</taxon>
        <taxon>Actinomycetota</taxon>
        <taxon>Actinomycetes</taxon>
        <taxon>Mycobacteriales</taxon>
        <taxon>Mycobacteriaceae</taxon>
        <taxon>Mycobacterium</taxon>
        <taxon>Mycobacterium tuberculosis complex</taxon>
    </lineage>
</organism>
<keyword id="KW-0001">2Fe-2S</keyword>
<keyword id="KW-0963">Cytoplasm</keyword>
<keyword id="KW-0350">Heme biosynthesis</keyword>
<keyword id="KW-0408">Iron</keyword>
<keyword id="KW-0411">Iron-sulfur</keyword>
<keyword id="KW-0456">Lyase</keyword>
<keyword id="KW-0479">Metal-binding</keyword>
<keyword id="KW-0627">Porphyrin biosynthesis</keyword>
<keyword id="KW-1185">Reference proteome</keyword>
<sequence length="344" mass="37144">MQFDAVLLLSFGGPEGPEQVRPFLENVTRGRGVPAERLDAVAEHYLHFGGVSPINGINRTLIAELEAQQELPVYFGNRNWEPYVEDAVTAMRDNGVRRAAVFATSAWSGYSSCTQYVEDIARARRAAGRDAPELVKLRPYFDHPLFVEMFADAITAAAATVRGDARLVFTAHSIPTAADRRCGPNLYSRQVAYATRLVAAAAGYCDFDLAWQSRSGPPQVPWLEPDVTDQLTGLAGAGINAVIVCPIGFVADHIEVVWDLDHELRLQAEAAGIAYARASTPNADPRFARLARGLIDELRYGRIPARVSGPDPVPGCLSSINGQPCRPPHCVASVSPARPSAGSP</sequence>